<evidence type="ECO:0000255" key="1">
    <source>
        <dbReference type="HAMAP-Rule" id="MF_01241"/>
    </source>
</evidence>
<organism>
    <name type="scientific">Listeria monocytogenes serovar 1/2a (strain ATCC BAA-679 / EGD-e)</name>
    <dbReference type="NCBI Taxonomy" id="169963"/>
    <lineage>
        <taxon>Bacteria</taxon>
        <taxon>Bacillati</taxon>
        <taxon>Bacillota</taxon>
        <taxon>Bacilli</taxon>
        <taxon>Bacillales</taxon>
        <taxon>Listeriaceae</taxon>
        <taxon>Listeria</taxon>
    </lineage>
</organism>
<proteinExistence type="inferred from homology"/>
<name>NAGB_LISMO</name>
<protein>
    <recommendedName>
        <fullName evidence="1">Glucosamine-6-phosphate deaminase</fullName>
        <ecNumber evidence="1">3.5.99.6</ecNumber>
    </recommendedName>
    <alternativeName>
        <fullName evidence="1">GlcN6P deaminase</fullName>
        <shortName evidence="1">GNPDA</shortName>
    </alternativeName>
    <alternativeName>
        <fullName evidence="1">Glucosamine-6-phosphate isomerase</fullName>
    </alternativeName>
</protein>
<gene>
    <name evidence="1" type="primary">nagB</name>
    <name type="ordered locus">lmo0957</name>
</gene>
<reference key="1">
    <citation type="journal article" date="2001" name="Science">
        <title>Comparative genomics of Listeria species.</title>
        <authorList>
            <person name="Glaser P."/>
            <person name="Frangeul L."/>
            <person name="Buchrieser C."/>
            <person name="Rusniok C."/>
            <person name="Amend A."/>
            <person name="Baquero F."/>
            <person name="Berche P."/>
            <person name="Bloecker H."/>
            <person name="Brandt P."/>
            <person name="Chakraborty T."/>
            <person name="Charbit A."/>
            <person name="Chetouani F."/>
            <person name="Couve E."/>
            <person name="de Daruvar A."/>
            <person name="Dehoux P."/>
            <person name="Domann E."/>
            <person name="Dominguez-Bernal G."/>
            <person name="Duchaud E."/>
            <person name="Durant L."/>
            <person name="Dussurget O."/>
            <person name="Entian K.-D."/>
            <person name="Fsihi H."/>
            <person name="Garcia-del Portillo F."/>
            <person name="Garrido P."/>
            <person name="Gautier L."/>
            <person name="Goebel W."/>
            <person name="Gomez-Lopez N."/>
            <person name="Hain T."/>
            <person name="Hauf J."/>
            <person name="Jackson D."/>
            <person name="Jones L.-M."/>
            <person name="Kaerst U."/>
            <person name="Kreft J."/>
            <person name="Kuhn M."/>
            <person name="Kunst F."/>
            <person name="Kurapkat G."/>
            <person name="Madueno E."/>
            <person name="Maitournam A."/>
            <person name="Mata Vicente J."/>
            <person name="Ng E."/>
            <person name="Nedjari H."/>
            <person name="Nordsiek G."/>
            <person name="Novella S."/>
            <person name="de Pablos B."/>
            <person name="Perez-Diaz J.-C."/>
            <person name="Purcell R."/>
            <person name="Remmel B."/>
            <person name="Rose M."/>
            <person name="Schlueter T."/>
            <person name="Simoes N."/>
            <person name="Tierrez A."/>
            <person name="Vazquez-Boland J.-A."/>
            <person name="Voss H."/>
            <person name="Wehland J."/>
            <person name="Cossart P."/>
        </authorList>
    </citation>
    <scope>NUCLEOTIDE SEQUENCE [LARGE SCALE GENOMIC DNA]</scope>
    <source>
        <strain>ATCC BAA-679 / EGD-e</strain>
    </source>
</reference>
<comment type="function">
    <text evidence="1">Catalyzes the reversible isomerization-deamination of glucosamine 6-phosphate (GlcN6P) to form fructose 6-phosphate (Fru6P) and ammonium ion.</text>
</comment>
<comment type="catalytic activity">
    <reaction evidence="1">
        <text>alpha-D-glucosamine 6-phosphate + H2O = beta-D-fructose 6-phosphate + NH4(+)</text>
        <dbReference type="Rhea" id="RHEA:12172"/>
        <dbReference type="ChEBI" id="CHEBI:15377"/>
        <dbReference type="ChEBI" id="CHEBI:28938"/>
        <dbReference type="ChEBI" id="CHEBI:57634"/>
        <dbReference type="ChEBI" id="CHEBI:75989"/>
        <dbReference type="EC" id="3.5.99.6"/>
    </reaction>
</comment>
<comment type="pathway">
    <text evidence="1">Amino-sugar metabolism; N-acetylneuraminate degradation; D-fructose 6-phosphate from N-acetylneuraminate: step 5/5.</text>
</comment>
<comment type="similarity">
    <text evidence="1">Belongs to the glucosamine/galactosamine-6-phosphate isomerase family. NagB subfamily.</text>
</comment>
<feature type="chain" id="PRO_0000160154" description="Glucosamine-6-phosphate deaminase">
    <location>
        <begin position="1"/>
        <end position="234"/>
    </location>
</feature>
<feature type="active site" description="Proton acceptor; for enolization step" evidence="1">
    <location>
        <position position="63"/>
    </location>
</feature>
<feature type="active site" description="For ring-opening step" evidence="1">
    <location>
        <position position="129"/>
    </location>
</feature>
<feature type="active site" description="Proton acceptor; for ring-opening step" evidence="1">
    <location>
        <position position="131"/>
    </location>
</feature>
<feature type="active site" description="For ring-opening step" evidence="1">
    <location>
        <position position="136"/>
    </location>
</feature>
<sequence length="234" mass="25511">MQLITTENKLAGSKKALEIIEKGITSGEVNTLGLATGSTPETLYAELVKSDVDTKNVTTTNLDEYVGLAASDPNSYHYYMNDLLFSKKAFKESFLPNGEATDAEAECARYEEILSEHPIDIQVLGIGTNGHIGFNEPGTSFDSITHKVVLTDSTREANKRFFEREEDVPTHAYSMGIKSIMNAKKIILLAFGENKAQAIKETIKGPVDVNCPASVLQNHPDVTVILDNEAASLL</sequence>
<accession>Q8Y8E7</accession>
<dbReference type="EC" id="3.5.99.6" evidence="1"/>
<dbReference type="EMBL" id="AL591977">
    <property type="protein sequence ID" value="CAC99035.1"/>
    <property type="molecule type" value="Genomic_DNA"/>
</dbReference>
<dbReference type="PIR" id="AE1194">
    <property type="entry name" value="AE1194"/>
</dbReference>
<dbReference type="RefSeq" id="NP_464482.1">
    <property type="nucleotide sequence ID" value="NC_003210.1"/>
</dbReference>
<dbReference type="RefSeq" id="WP_009932532.1">
    <property type="nucleotide sequence ID" value="NZ_CP149495.1"/>
</dbReference>
<dbReference type="SMR" id="Q8Y8E7"/>
<dbReference type="STRING" id="169963.gene:17593613"/>
<dbReference type="PaxDb" id="169963-lmo0957"/>
<dbReference type="EnsemblBacteria" id="CAC99035">
    <property type="protein sequence ID" value="CAC99035"/>
    <property type="gene ID" value="CAC99035"/>
</dbReference>
<dbReference type="GeneID" id="986480"/>
<dbReference type="KEGG" id="lmo:lmo0957"/>
<dbReference type="PATRIC" id="fig|169963.11.peg.984"/>
<dbReference type="eggNOG" id="COG0363">
    <property type="taxonomic scope" value="Bacteria"/>
</dbReference>
<dbReference type="HOGENOM" id="CLU_049611_1_0_9"/>
<dbReference type="OrthoDB" id="9791139at2"/>
<dbReference type="PhylomeDB" id="Q8Y8E7"/>
<dbReference type="BioCyc" id="LMON169963:LMO0957-MONOMER"/>
<dbReference type="UniPathway" id="UPA00629">
    <property type="reaction ID" value="UER00684"/>
</dbReference>
<dbReference type="Proteomes" id="UP000000817">
    <property type="component" value="Chromosome"/>
</dbReference>
<dbReference type="GO" id="GO:0005737">
    <property type="term" value="C:cytoplasm"/>
    <property type="evidence" value="ECO:0000318"/>
    <property type="project" value="GO_Central"/>
</dbReference>
<dbReference type="GO" id="GO:0004342">
    <property type="term" value="F:glucosamine-6-phosphate deaminase activity"/>
    <property type="evidence" value="ECO:0000318"/>
    <property type="project" value="GO_Central"/>
</dbReference>
<dbReference type="GO" id="GO:0042802">
    <property type="term" value="F:identical protein binding"/>
    <property type="evidence" value="ECO:0000318"/>
    <property type="project" value="GO_Central"/>
</dbReference>
<dbReference type="GO" id="GO:0005975">
    <property type="term" value="P:carbohydrate metabolic process"/>
    <property type="evidence" value="ECO:0007669"/>
    <property type="project" value="InterPro"/>
</dbReference>
<dbReference type="GO" id="GO:0006043">
    <property type="term" value="P:glucosamine catabolic process"/>
    <property type="evidence" value="ECO:0000318"/>
    <property type="project" value="GO_Central"/>
</dbReference>
<dbReference type="GO" id="GO:0006046">
    <property type="term" value="P:N-acetylglucosamine catabolic process"/>
    <property type="evidence" value="ECO:0000318"/>
    <property type="project" value="GO_Central"/>
</dbReference>
<dbReference type="GO" id="GO:0019262">
    <property type="term" value="P:N-acetylneuraminate catabolic process"/>
    <property type="evidence" value="ECO:0000318"/>
    <property type="project" value="GO_Central"/>
</dbReference>
<dbReference type="CDD" id="cd01399">
    <property type="entry name" value="GlcN6P_deaminase"/>
    <property type="match status" value="1"/>
</dbReference>
<dbReference type="FunFam" id="3.40.50.1360:FF:000003">
    <property type="entry name" value="Glucosamine-6-phosphate deaminase"/>
    <property type="match status" value="1"/>
</dbReference>
<dbReference type="Gene3D" id="3.40.50.1360">
    <property type="match status" value="1"/>
</dbReference>
<dbReference type="HAMAP" id="MF_01241">
    <property type="entry name" value="GlcN6P_deamin"/>
    <property type="match status" value="1"/>
</dbReference>
<dbReference type="InterPro" id="IPR006148">
    <property type="entry name" value="Glc/Gal-6P_isomerase"/>
</dbReference>
<dbReference type="InterPro" id="IPR004547">
    <property type="entry name" value="Glucosamine6P_isomerase"/>
</dbReference>
<dbReference type="InterPro" id="IPR018321">
    <property type="entry name" value="Glucosamine6P_isomerase_CS"/>
</dbReference>
<dbReference type="InterPro" id="IPR037171">
    <property type="entry name" value="NagB/RpiA_transferase-like"/>
</dbReference>
<dbReference type="NCBIfam" id="TIGR00502">
    <property type="entry name" value="nagB"/>
    <property type="match status" value="1"/>
</dbReference>
<dbReference type="PANTHER" id="PTHR11280">
    <property type="entry name" value="GLUCOSAMINE-6-PHOSPHATE ISOMERASE"/>
    <property type="match status" value="1"/>
</dbReference>
<dbReference type="PANTHER" id="PTHR11280:SF5">
    <property type="entry name" value="GLUCOSAMINE-6-PHOSPHATE ISOMERASE"/>
    <property type="match status" value="1"/>
</dbReference>
<dbReference type="Pfam" id="PF01182">
    <property type="entry name" value="Glucosamine_iso"/>
    <property type="match status" value="1"/>
</dbReference>
<dbReference type="SUPFAM" id="SSF100950">
    <property type="entry name" value="NagB/RpiA/CoA transferase-like"/>
    <property type="match status" value="1"/>
</dbReference>
<dbReference type="PROSITE" id="PS01161">
    <property type="entry name" value="GLC_GALNAC_ISOMERASE"/>
    <property type="match status" value="1"/>
</dbReference>
<keyword id="KW-0119">Carbohydrate metabolism</keyword>
<keyword id="KW-0378">Hydrolase</keyword>
<keyword id="KW-1185">Reference proteome</keyword>